<comment type="similarity">
    <text evidence="1">Belongs to the bacterial ribosomal protein bL34 family.</text>
</comment>
<keyword id="KW-0687">Ribonucleoprotein</keyword>
<keyword id="KW-0689">Ribosomal protein</keyword>
<gene>
    <name evidence="1" type="primary">rpmH</name>
    <name type="ordered locus">LACR_0132</name>
</gene>
<organism>
    <name type="scientific">Lactococcus lactis subsp. cremoris (strain SK11)</name>
    <dbReference type="NCBI Taxonomy" id="272622"/>
    <lineage>
        <taxon>Bacteria</taxon>
        <taxon>Bacillati</taxon>
        <taxon>Bacillota</taxon>
        <taxon>Bacilli</taxon>
        <taxon>Lactobacillales</taxon>
        <taxon>Streptococcaceae</taxon>
        <taxon>Lactococcus</taxon>
        <taxon>Lactococcus cremoris subsp. cremoris</taxon>
    </lineage>
</organism>
<sequence length="44" mass="5182">MKRTYQPHKKSRKTTHGFRSRMATKNGRRVLAARRRKGRASLTV</sequence>
<evidence type="ECO:0000255" key="1">
    <source>
        <dbReference type="HAMAP-Rule" id="MF_00391"/>
    </source>
</evidence>
<evidence type="ECO:0000256" key="2">
    <source>
        <dbReference type="SAM" id="MobiDB-lite"/>
    </source>
</evidence>
<evidence type="ECO:0000305" key="3"/>
<feature type="chain" id="PRO_1000013362" description="Large ribosomal subunit protein bL34">
    <location>
        <begin position="1"/>
        <end position="44"/>
    </location>
</feature>
<feature type="region of interest" description="Disordered" evidence="2">
    <location>
        <begin position="1"/>
        <end position="26"/>
    </location>
</feature>
<feature type="compositionally biased region" description="Basic residues" evidence="2">
    <location>
        <begin position="1"/>
        <end position="19"/>
    </location>
</feature>
<accession>Q032W9</accession>
<dbReference type="EMBL" id="CP000425">
    <property type="protein sequence ID" value="ABJ71753.1"/>
    <property type="molecule type" value="Genomic_DNA"/>
</dbReference>
<dbReference type="RefSeq" id="WP_003131818.1">
    <property type="nucleotide sequence ID" value="NC_008527.1"/>
</dbReference>
<dbReference type="SMR" id="Q032W9"/>
<dbReference type="GeneID" id="89632278"/>
<dbReference type="KEGG" id="llc:LACR_0132"/>
<dbReference type="HOGENOM" id="CLU_129938_2_0_9"/>
<dbReference type="Proteomes" id="UP000000240">
    <property type="component" value="Chromosome"/>
</dbReference>
<dbReference type="GO" id="GO:1990904">
    <property type="term" value="C:ribonucleoprotein complex"/>
    <property type="evidence" value="ECO:0007669"/>
    <property type="project" value="UniProtKB-KW"/>
</dbReference>
<dbReference type="GO" id="GO:0005840">
    <property type="term" value="C:ribosome"/>
    <property type="evidence" value="ECO:0007669"/>
    <property type="project" value="UniProtKB-KW"/>
</dbReference>
<dbReference type="GO" id="GO:0003735">
    <property type="term" value="F:structural constituent of ribosome"/>
    <property type="evidence" value="ECO:0007669"/>
    <property type="project" value="InterPro"/>
</dbReference>
<dbReference type="GO" id="GO:0006412">
    <property type="term" value="P:translation"/>
    <property type="evidence" value="ECO:0007669"/>
    <property type="project" value="UniProtKB-UniRule"/>
</dbReference>
<dbReference type="FunFam" id="1.10.287.3980:FF:000001">
    <property type="entry name" value="Mitochondrial ribosomal protein L34"/>
    <property type="match status" value="1"/>
</dbReference>
<dbReference type="Gene3D" id="1.10.287.3980">
    <property type="match status" value="1"/>
</dbReference>
<dbReference type="HAMAP" id="MF_00391">
    <property type="entry name" value="Ribosomal_bL34"/>
    <property type="match status" value="1"/>
</dbReference>
<dbReference type="InterPro" id="IPR000271">
    <property type="entry name" value="Ribosomal_bL34"/>
</dbReference>
<dbReference type="InterPro" id="IPR020939">
    <property type="entry name" value="Ribosomal_bL34_CS"/>
</dbReference>
<dbReference type="NCBIfam" id="TIGR01030">
    <property type="entry name" value="rpmH_bact"/>
    <property type="match status" value="1"/>
</dbReference>
<dbReference type="PANTHER" id="PTHR14503:SF4">
    <property type="entry name" value="LARGE RIBOSOMAL SUBUNIT PROTEIN BL34M"/>
    <property type="match status" value="1"/>
</dbReference>
<dbReference type="PANTHER" id="PTHR14503">
    <property type="entry name" value="MITOCHONDRIAL RIBOSOMAL PROTEIN 34 FAMILY MEMBER"/>
    <property type="match status" value="1"/>
</dbReference>
<dbReference type="Pfam" id="PF00468">
    <property type="entry name" value="Ribosomal_L34"/>
    <property type="match status" value="1"/>
</dbReference>
<dbReference type="PROSITE" id="PS00784">
    <property type="entry name" value="RIBOSOMAL_L34"/>
    <property type="match status" value="1"/>
</dbReference>
<proteinExistence type="inferred from homology"/>
<protein>
    <recommendedName>
        <fullName evidence="1">Large ribosomal subunit protein bL34</fullName>
    </recommendedName>
    <alternativeName>
        <fullName evidence="3">50S ribosomal protein L34</fullName>
    </alternativeName>
</protein>
<reference key="1">
    <citation type="journal article" date="2006" name="Proc. Natl. Acad. Sci. U.S.A.">
        <title>Comparative genomics of the lactic acid bacteria.</title>
        <authorList>
            <person name="Makarova K.S."/>
            <person name="Slesarev A."/>
            <person name="Wolf Y.I."/>
            <person name="Sorokin A."/>
            <person name="Mirkin B."/>
            <person name="Koonin E.V."/>
            <person name="Pavlov A."/>
            <person name="Pavlova N."/>
            <person name="Karamychev V."/>
            <person name="Polouchine N."/>
            <person name="Shakhova V."/>
            <person name="Grigoriev I."/>
            <person name="Lou Y."/>
            <person name="Rohksar D."/>
            <person name="Lucas S."/>
            <person name="Huang K."/>
            <person name="Goodstein D.M."/>
            <person name="Hawkins T."/>
            <person name="Plengvidhya V."/>
            <person name="Welker D."/>
            <person name="Hughes J."/>
            <person name="Goh Y."/>
            <person name="Benson A."/>
            <person name="Baldwin K."/>
            <person name="Lee J.-H."/>
            <person name="Diaz-Muniz I."/>
            <person name="Dosti B."/>
            <person name="Smeianov V."/>
            <person name="Wechter W."/>
            <person name="Barabote R."/>
            <person name="Lorca G."/>
            <person name="Altermann E."/>
            <person name="Barrangou R."/>
            <person name="Ganesan B."/>
            <person name="Xie Y."/>
            <person name="Rawsthorne H."/>
            <person name="Tamir D."/>
            <person name="Parker C."/>
            <person name="Breidt F."/>
            <person name="Broadbent J.R."/>
            <person name="Hutkins R."/>
            <person name="O'Sullivan D."/>
            <person name="Steele J."/>
            <person name="Unlu G."/>
            <person name="Saier M.H. Jr."/>
            <person name="Klaenhammer T."/>
            <person name="Richardson P."/>
            <person name="Kozyavkin S."/>
            <person name="Weimer B.C."/>
            <person name="Mills D.A."/>
        </authorList>
    </citation>
    <scope>NUCLEOTIDE SEQUENCE [LARGE SCALE GENOMIC DNA]</scope>
    <source>
        <strain>SK11</strain>
    </source>
</reference>
<name>RL34_LACLS</name>